<sequence length="357" mass="39904">MRKIIHCDCDCFYAAIEMRDDPRLVGRPLAVGGRPERRGVVATCNYEARKFGIHSAMPMAQAVKRCPDLLIVPPAMDKYRQVARQIFAIYQGYTPLVEPLSLDEAYLDVTDSPMLAGSGTRIAEDIRRRVREEIGITVSAGVAPNKFIAKIASDWNKPDGLFVVRPEQVDAFVAALPVERLFGVGKVTAAKLRRLGAQTCGDLRGWGADRLQQHFGSFGFRLHDLCRGIDHRQVQPSQIRKSVSVEETYATDLRTLDDCQRELTILVDQLAARVERARAGDMIHKTFVKLRFADFRGTTVECVYPQVALPVFNRLLAQGFERRRMPVRLLGVGVRLHETDAHARQQALFAEGPPPGA</sequence>
<organism>
    <name type="scientific">Ralstonia nicotianae (strain ATCC BAA-1114 / GMI1000)</name>
    <name type="common">Ralstonia solanacearum</name>
    <dbReference type="NCBI Taxonomy" id="267608"/>
    <lineage>
        <taxon>Bacteria</taxon>
        <taxon>Pseudomonadati</taxon>
        <taxon>Pseudomonadota</taxon>
        <taxon>Betaproteobacteria</taxon>
        <taxon>Burkholderiales</taxon>
        <taxon>Burkholderiaceae</taxon>
        <taxon>Ralstonia</taxon>
        <taxon>Ralstonia solanacearum species complex</taxon>
    </lineage>
</organism>
<reference key="1">
    <citation type="journal article" date="2002" name="Nature">
        <title>Genome sequence of the plant pathogen Ralstonia solanacearum.</title>
        <authorList>
            <person name="Salanoubat M."/>
            <person name="Genin S."/>
            <person name="Artiguenave F."/>
            <person name="Gouzy J."/>
            <person name="Mangenot S."/>
            <person name="Arlat M."/>
            <person name="Billault A."/>
            <person name="Brottier P."/>
            <person name="Camus J.-C."/>
            <person name="Cattolico L."/>
            <person name="Chandler M."/>
            <person name="Choisne N."/>
            <person name="Claudel-Renard C."/>
            <person name="Cunnac S."/>
            <person name="Demange N."/>
            <person name="Gaspin C."/>
            <person name="Lavie M."/>
            <person name="Moisan A."/>
            <person name="Robert C."/>
            <person name="Saurin W."/>
            <person name="Schiex T."/>
            <person name="Siguier P."/>
            <person name="Thebault P."/>
            <person name="Whalen M."/>
            <person name="Wincker P."/>
            <person name="Levy M."/>
            <person name="Weissenbach J."/>
            <person name="Boucher C.A."/>
        </authorList>
    </citation>
    <scope>NUCLEOTIDE SEQUENCE [LARGE SCALE GENOMIC DNA]</scope>
    <source>
        <strain>ATCC BAA-1114 / GMI1000</strain>
    </source>
</reference>
<gene>
    <name evidence="1" type="primary">dinB</name>
    <name type="ordered locus">RSc1587</name>
    <name type="ORF">RS03949</name>
</gene>
<keyword id="KW-0963">Cytoplasm</keyword>
<keyword id="KW-0227">DNA damage</keyword>
<keyword id="KW-0234">DNA repair</keyword>
<keyword id="KW-0235">DNA replication</keyword>
<keyword id="KW-0238">DNA-binding</keyword>
<keyword id="KW-0239">DNA-directed DNA polymerase</keyword>
<keyword id="KW-0460">Magnesium</keyword>
<keyword id="KW-0479">Metal-binding</keyword>
<keyword id="KW-0515">Mutator protein</keyword>
<keyword id="KW-0548">Nucleotidyltransferase</keyword>
<keyword id="KW-1185">Reference proteome</keyword>
<keyword id="KW-0808">Transferase</keyword>
<evidence type="ECO:0000255" key="1">
    <source>
        <dbReference type="HAMAP-Rule" id="MF_01113"/>
    </source>
</evidence>
<evidence type="ECO:0000305" key="2"/>
<feature type="chain" id="PRO_0000173935" description="DNA polymerase IV">
    <location>
        <begin position="1"/>
        <end position="357"/>
    </location>
</feature>
<feature type="domain" description="UmuC" evidence="1">
    <location>
        <begin position="4"/>
        <end position="185"/>
    </location>
</feature>
<feature type="active site" evidence="1">
    <location>
        <position position="104"/>
    </location>
</feature>
<feature type="binding site" evidence="1">
    <location>
        <position position="8"/>
    </location>
    <ligand>
        <name>Mg(2+)</name>
        <dbReference type="ChEBI" id="CHEBI:18420"/>
    </ligand>
</feature>
<feature type="binding site" evidence="1">
    <location>
        <position position="103"/>
    </location>
    <ligand>
        <name>Mg(2+)</name>
        <dbReference type="ChEBI" id="CHEBI:18420"/>
    </ligand>
</feature>
<feature type="site" description="Substrate discrimination" evidence="1">
    <location>
        <position position="13"/>
    </location>
</feature>
<comment type="function">
    <text evidence="1">Poorly processive, error-prone DNA polymerase involved in untargeted mutagenesis. Copies undamaged DNA at stalled replication forks, which arise in vivo from mismatched or misaligned primer ends. These misaligned primers can be extended by PolIV. Exhibits no 3'-5' exonuclease (proofreading) activity. May be involved in translesional synthesis, in conjunction with the beta clamp from PolIII.</text>
</comment>
<comment type="catalytic activity">
    <reaction evidence="1">
        <text>DNA(n) + a 2'-deoxyribonucleoside 5'-triphosphate = DNA(n+1) + diphosphate</text>
        <dbReference type="Rhea" id="RHEA:22508"/>
        <dbReference type="Rhea" id="RHEA-COMP:17339"/>
        <dbReference type="Rhea" id="RHEA-COMP:17340"/>
        <dbReference type="ChEBI" id="CHEBI:33019"/>
        <dbReference type="ChEBI" id="CHEBI:61560"/>
        <dbReference type="ChEBI" id="CHEBI:173112"/>
        <dbReference type="EC" id="2.7.7.7"/>
    </reaction>
</comment>
<comment type="cofactor">
    <cofactor evidence="1">
        <name>Mg(2+)</name>
        <dbReference type="ChEBI" id="CHEBI:18420"/>
    </cofactor>
    <text evidence="1">Binds 2 magnesium ions per subunit.</text>
</comment>
<comment type="subunit">
    <text evidence="1">Monomer.</text>
</comment>
<comment type="subcellular location">
    <subcellularLocation>
        <location evidence="1">Cytoplasm</location>
    </subcellularLocation>
</comment>
<comment type="similarity">
    <text evidence="1">Belongs to the DNA polymerase type-Y family.</text>
</comment>
<comment type="sequence caution" evidence="2">
    <conflict type="erroneous initiation">
        <sequence resource="EMBL-CDS" id="CAD15289"/>
    </conflict>
</comment>
<proteinExistence type="inferred from homology"/>
<name>DPO4_RALN1</name>
<accession>Q8XZ19</accession>
<protein>
    <recommendedName>
        <fullName evidence="1">DNA polymerase IV</fullName>
        <shortName evidence="1">Pol IV</shortName>
        <ecNumber evidence="1">2.7.7.7</ecNumber>
    </recommendedName>
</protein>
<dbReference type="EC" id="2.7.7.7" evidence="1"/>
<dbReference type="EMBL" id="AL646052">
    <property type="protein sequence ID" value="CAD15289.1"/>
    <property type="status" value="ALT_INIT"/>
    <property type="molecule type" value="Genomic_DNA"/>
</dbReference>
<dbReference type="SMR" id="Q8XZ19"/>
<dbReference type="STRING" id="267608.RSc1587"/>
<dbReference type="EnsemblBacteria" id="CAD15289">
    <property type="protein sequence ID" value="CAD15289"/>
    <property type="gene ID" value="RSc1587"/>
</dbReference>
<dbReference type="KEGG" id="rso:RSc1587"/>
<dbReference type="eggNOG" id="COG0389">
    <property type="taxonomic scope" value="Bacteria"/>
</dbReference>
<dbReference type="HOGENOM" id="CLU_012348_1_2_4"/>
<dbReference type="Proteomes" id="UP000001436">
    <property type="component" value="Chromosome"/>
</dbReference>
<dbReference type="GO" id="GO:0005829">
    <property type="term" value="C:cytosol"/>
    <property type="evidence" value="ECO:0007669"/>
    <property type="project" value="TreeGrafter"/>
</dbReference>
<dbReference type="GO" id="GO:0003684">
    <property type="term" value="F:damaged DNA binding"/>
    <property type="evidence" value="ECO:0007669"/>
    <property type="project" value="InterPro"/>
</dbReference>
<dbReference type="GO" id="GO:0003887">
    <property type="term" value="F:DNA-directed DNA polymerase activity"/>
    <property type="evidence" value="ECO:0007669"/>
    <property type="project" value="UniProtKB-UniRule"/>
</dbReference>
<dbReference type="GO" id="GO:0000287">
    <property type="term" value="F:magnesium ion binding"/>
    <property type="evidence" value="ECO:0007669"/>
    <property type="project" value="UniProtKB-UniRule"/>
</dbReference>
<dbReference type="GO" id="GO:0006261">
    <property type="term" value="P:DNA-templated DNA replication"/>
    <property type="evidence" value="ECO:0007669"/>
    <property type="project" value="UniProtKB-UniRule"/>
</dbReference>
<dbReference type="GO" id="GO:0042276">
    <property type="term" value="P:error-prone translesion synthesis"/>
    <property type="evidence" value="ECO:0007669"/>
    <property type="project" value="TreeGrafter"/>
</dbReference>
<dbReference type="GO" id="GO:0009432">
    <property type="term" value="P:SOS response"/>
    <property type="evidence" value="ECO:0007669"/>
    <property type="project" value="TreeGrafter"/>
</dbReference>
<dbReference type="CDD" id="cd03586">
    <property type="entry name" value="PolY_Pol_IV_kappa"/>
    <property type="match status" value="1"/>
</dbReference>
<dbReference type="FunFam" id="1.10.150.20:FF:000019">
    <property type="entry name" value="DNA polymerase IV"/>
    <property type="match status" value="1"/>
</dbReference>
<dbReference type="FunFam" id="3.40.1170.60:FF:000001">
    <property type="entry name" value="DNA polymerase IV"/>
    <property type="match status" value="1"/>
</dbReference>
<dbReference type="Gene3D" id="3.30.70.270">
    <property type="match status" value="1"/>
</dbReference>
<dbReference type="Gene3D" id="3.40.1170.60">
    <property type="match status" value="1"/>
</dbReference>
<dbReference type="Gene3D" id="1.10.150.20">
    <property type="entry name" value="5' to 3' exonuclease, C-terminal subdomain"/>
    <property type="match status" value="1"/>
</dbReference>
<dbReference type="Gene3D" id="3.30.1490.100">
    <property type="entry name" value="DNA polymerase, Y-family, little finger domain"/>
    <property type="match status" value="1"/>
</dbReference>
<dbReference type="HAMAP" id="MF_01113">
    <property type="entry name" value="DNApol_IV"/>
    <property type="match status" value="1"/>
</dbReference>
<dbReference type="InterPro" id="IPR043502">
    <property type="entry name" value="DNA/RNA_pol_sf"/>
</dbReference>
<dbReference type="InterPro" id="IPR036775">
    <property type="entry name" value="DNA_pol_Y-fam_lit_finger_sf"/>
</dbReference>
<dbReference type="InterPro" id="IPR017961">
    <property type="entry name" value="DNA_pol_Y-fam_little_finger"/>
</dbReference>
<dbReference type="InterPro" id="IPR050116">
    <property type="entry name" value="DNA_polymerase-Y"/>
</dbReference>
<dbReference type="InterPro" id="IPR022880">
    <property type="entry name" value="DNApol_IV"/>
</dbReference>
<dbReference type="InterPro" id="IPR053848">
    <property type="entry name" value="IMS_HHH_1"/>
</dbReference>
<dbReference type="InterPro" id="IPR043128">
    <property type="entry name" value="Rev_trsase/Diguanyl_cyclase"/>
</dbReference>
<dbReference type="InterPro" id="IPR001126">
    <property type="entry name" value="UmuC"/>
</dbReference>
<dbReference type="NCBIfam" id="NF002677">
    <property type="entry name" value="PRK02406.1"/>
    <property type="match status" value="1"/>
</dbReference>
<dbReference type="PANTHER" id="PTHR11076:SF33">
    <property type="entry name" value="DNA POLYMERASE KAPPA"/>
    <property type="match status" value="1"/>
</dbReference>
<dbReference type="PANTHER" id="PTHR11076">
    <property type="entry name" value="DNA REPAIR POLYMERASE UMUC / TRANSFERASE FAMILY MEMBER"/>
    <property type="match status" value="1"/>
</dbReference>
<dbReference type="Pfam" id="PF00817">
    <property type="entry name" value="IMS"/>
    <property type="match status" value="1"/>
</dbReference>
<dbReference type="Pfam" id="PF11799">
    <property type="entry name" value="IMS_C"/>
    <property type="match status" value="1"/>
</dbReference>
<dbReference type="Pfam" id="PF21999">
    <property type="entry name" value="IMS_HHH_1"/>
    <property type="match status" value="1"/>
</dbReference>
<dbReference type="SUPFAM" id="SSF56672">
    <property type="entry name" value="DNA/RNA polymerases"/>
    <property type="match status" value="1"/>
</dbReference>
<dbReference type="SUPFAM" id="SSF100879">
    <property type="entry name" value="Lesion bypass DNA polymerase (Y-family), little finger domain"/>
    <property type="match status" value="1"/>
</dbReference>
<dbReference type="PROSITE" id="PS50173">
    <property type="entry name" value="UMUC"/>
    <property type="match status" value="1"/>
</dbReference>